<accession>Q645U2</accession>
<dbReference type="EMBL" id="AY724992">
    <property type="protein sequence ID" value="AAU21177.1"/>
    <property type="molecule type" value="Genomic_DNA"/>
</dbReference>
<dbReference type="GlyCosmos" id="Q645U2">
    <property type="glycosylation" value="1 site, No reported glycans"/>
</dbReference>
<dbReference type="GO" id="GO:0005886">
    <property type="term" value="C:plasma membrane"/>
    <property type="evidence" value="ECO:0007669"/>
    <property type="project" value="UniProtKB-ARBA"/>
</dbReference>
<dbReference type="GO" id="GO:0033038">
    <property type="term" value="F:bitter taste receptor activity"/>
    <property type="evidence" value="ECO:0007669"/>
    <property type="project" value="InterPro"/>
</dbReference>
<dbReference type="GO" id="GO:0004930">
    <property type="term" value="F:G protein-coupled receptor activity"/>
    <property type="evidence" value="ECO:0007669"/>
    <property type="project" value="UniProtKB-KW"/>
</dbReference>
<dbReference type="CDD" id="cd15020">
    <property type="entry name" value="7tm_TAS2R3"/>
    <property type="match status" value="1"/>
</dbReference>
<dbReference type="FunFam" id="1.20.1070.10:FF:000042">
    <property type="entry name" value="Taste receptor type 2 member 7"/>
    <property type="match status" value="1"/>
</dbReference>
<dbReference type="Gene3D" id="1.20.1070.10">
    <property type="entry name" value="Rhodopsin 7-helix transmembrane proteins"/>
    <property type="match status" value="1"/>
</dbReference>
<dbReference type="InterPro" id="IPR007960">
    <property type="entry name" value="TAS2R"/>
</dbReference>
<dbReference type="PANTHER" id="PTHR11394">
    <property type="entry name" value="TASTE RECEPTOR TYPE 2"/>
    <property type="match status" value="1"/>
</dbReference>
<dbReference type="PANTHER" id="PTHR11394:SF49">
    <property type="entry name" value="TASTE RECEPTOR TYPE 2 MEMBER 3"/>
    <property type="match status" value="1"/>
</dbReference>
<dbReference type="Pfam" id="PF05296">
    <property type="entry name" value="TAS2R"/>
    <property type="match status" value="1"/>
</dbReference>
<dbReference type="SUPFAM" id="SSF81321">
    <property type="entry name" value="Family A G protein-coupled receptor-like"/>
    <property type="match status" value="1"/>
</dbReference>
<organism>
    <name type="scientific">Pongo pygmaeus</name>
    <name type="common">Bornean orangutan</name>
    <dbReference type="NCBI Taxonomy" id="9600"/>
    <lineage>
        <taxon>Eukaryota</taxon>
        <taxon>Metazoa</taxon>
        <taxon>Chordata</taxon>
        <taxon>Craniata</taxon>
        <taxon>Vertebrata</taxon>
        <taxon>Euteleostomi</taxon>
        <taxon>Mammalia</taxon>
        <taxon>Eutheria</taxon>
        <taxon>Euarchontoglires</taxon>
        <taxon>Primates</taxon>
        <taxon>Haplorrhini</taxon>
        <taxon>Catarrhini</taxon>
        <taxon>Hominidae</taxon>
        <taxon>Pongo</taxon>
    </lineage>
</organism>
<proteinExistence type="inferred from homology"/>
<feature type="chain" id="PRO_0000082201" description="Taste receptor type 2 member 3">
    <location>
        <begin position="1"/>
        <end position="315"/>
    </location>
</feature>
<feature type="topological domain" description="Extracellular" evidence="2">
    <location>
        <begin position="1"/>
        <end position="5"/>
    </location>
</feature>
<feature type="transmembrane region" description="Helical; Name=1" evidence="2">
    <location>
        <begin position="6"/>
        <end position="26"/>
    </location>
</feature>
<feature type="topological domain" description="Cytoplasmic" evidence="2">
    <location>
        <begin position="27"/>
        <end position="41"/>
    </location>
</feature>
<feature type="transmembrane region" description="Helical; Name=2" evidence="2">
    <location>
        <begin position="42"/>
        <end position="62"/>
    </location>
</feature>
<feature type="topological domain" description="Extracellular" evidence="2">
    <location>
        <begin position="63"/>
        <end position="93"/>
    </location>
</feature>
<feature type="transmembrane region" description="Helical; Name=3" evidence="2">
    <location>
        <begin position="94"/>
        <end position="114"/>
    </location>
</feature>
<feature type="topological domain" description="Cytoplasmic" evidence="2">
    <location>
        <begin position="115"/>
        <end position="127"/>
    </location>
</feature>
<feature type="transmembrane region" description="Helical; Name=4" evidence="2">
    <location>
        <begin position="128"/>
        <end position="148"/>
    </location>
</feature>
<feature type="topological domain" description="Extracellular" evidence="2">
    <location>
        <begin position="149"/>
        <end position="185"/>
    </location>
</feature>
<feature type="transmembrane region" description="Helical; Name=5" evidence="2">
    <location>
        <begin position="186"/>
        <end position="206"/>
    </location>
</feature>
<feature type="topological domain" description="Cytoplasmic" evidence="2">
    <location>
        <begin position="207"/>
        <end position="233"/>
    </location>
</feature>
<feature type="transmembrane region" description="Helical; Name=6" evidence="2">
    <location>
        <begin position="234"/>
        <end position="254"/>
    </location>
</feature>
<feature type="topological domain" description="Extracellular" evidence="2">
    <location>
        <begin position="255"/>
        <end position="265"/>
    </location>
</feature>
<feature type="transmembrane region" description="Helical; Name=7" evidence="2">
    <location>
        <begin position="266"/>
        <end position="286"/>
    </location>
</feature>
<feature type="topological domain" description="Cytoplasmic" evidence="2">
    <location>
        <begin position="287"/>
        <end position="315"/>
    </location>
</feature>
<feature type="glycosylation site" description="N-linked (GlcNAc...) asparagine" evidence="2">
    <location>
        <position position="165"/>
    </location>
</feature>
<reference key="1">
    <citation type="journal article" date="2005" name="Mol. Biol. Evol.">
        <title>Evolution of bitter taste receptors in humans and apes.</title>
        <authorList>
            <person name="Fischer A."/>
            <person name="Gilad Y."/>
            <person name="Man O."/>
            <person name="Paeaebo S."/>
        </authorList>
    </citation>
    <scope>NUCLEOTIDE SEQUENCE [GENOMIC DNA]</scope>
</reference>
<protein>
    <recommendedName>
        <fullName>Taste receptor type 2 member 3</fullName>
        <shortName>T2R3</shortName>
    </recommendedName>
</protein>
<evidence type="ECO:0000250" key="1"/>
<evidence type="ECO:0000255" key="2"/>
<evidence type="ECO:0000305" key="3"/>
<gene>
    <name type="primary">TAS2R3</name>
</gene>
<name>TA2R3_PONPY</name>
<sequence length="315" mass="35669">MGLTEGLFLILSGTQFALGILVNCFIGLVNGSSWFKTKRMSLSDFIITTLAFLRIILLCIILTDSFLIEFSPNAHDSGVIMQIIDVSWTFTNHLSIWLATCLGVLYCLKIASFSHPTFLWLKWRVSRVMVWMLLGVLLLSCGSTASLINEFKLYSVFRGIEATXNVTEHFRKKRSEYYLIHVLGTLWYLPPLIVSLAAYFLLIFSLGRHTRQMLQNGTSSRDPSTEAHKRAIRIILSSFFLFLLYFLAFLIASFGNFLPKTKMAKMIGEVMTMFYPAGHSFILILGNSKLKQTFVEMLRCESGHLKPGSKGPIFS</sequence>
<keyword id="KW-0297">G-protein coupled receptor</keyword>
<keyword id="KW-0325">Glycoprotein</keyword>
<keyword id="KW-0472">Membrane</keyword>
<keyword id="KW-0675">Receptor</keyword>
<keyword id="KW-0716">Sensory transduction</keyword>
<keyword id="KW-0919">Taste</keyword>
<keyword id="KW-0807">Transducer</keyword>
<keyword id="KW-0812">Transmembrane</keyword>
<keyword id="KW-1133">Transmembrane helix</keyword>
<comment type="function">
    <text evidence="1">Gustducin-coupled receptor implicated in the perception of bitter compounds in the oral cavity and the gastrointestinal tract. Signals through PLCB2 and the calcium-regulated cation channel TRPM5 (By similarity).</text>
</comment>
<comment type="subcellular location">
    <subcellularLocation>
        <location>Membrane</location>
        <topology>Multi-pass membrane protein</topology>
    </subcellularLocation>
</comment>
<comment type="miscellaneous">
    <text>Several bitter taste receptors are expressed in a single taste receptor cell.</text>
</comment>
<comment type="similarity">
    <text evidence="3">Belongs to the G-protein coupled receptor T2R family.</text>
</comment>